<dbReference type="EC" id="2.7.4.3" evidence="1"/>
<dbReference type="EMBL" id="CP000437">
    <property type="protein sequence ID" value="ABI82723.1"/>
    <property type="molecule type" value="Genomic_DNA"/>
</dbReference>
<dbReference type="RefSeq" id="WP_003015336.1">
    <property type="nucleotide sequence ID" value="NC_017463.1"/>
</dbReference>
<dbReference type="SMR" id="Q0BMG1"/>
<dbReference type="KEGG" id="fth:FTH_0788"/>
<dbReference type="UniPathway" id="UPA00588">
    <property type="reaction ID" value="UER00649"/>
</dbReference>
<dbReference type="GO" id="GO:0005737">
    <property type="term" value="C:cytoplasm"/>
    <property type="evidence" value="ECO:0007669"/>
    <property type="project" value="UniProtKB-SubCell"/>
</dbReference>
<dbReference type="GO" id="GO:0004017">
    <property type="term" value="F:adenylate kinase activity"/>
    <property type="evidence" value="ECO:0007669"/>
    <property type="project" value="UniProtKB-UniRule"/>
</dbReference>
<dbReference type="GO" id="GO:0005524">
    <property type="term" value="F:ATP binding"/>
    <property type="evidence" value="ECO:0007669"/>
    <property type="project" value="UniProtKB-UniRule"/>
</dbReference>
<dbReference type="GO" id="GO:0044209">
    <property type="term" value="P:AMP salvage"/>
    <property type="evidence" value="ECO:0007669"/>
    <property type="project" value="UniProtKB-UniRule"/>
</dbReference>
<dbReference type="CDD" id="cd01428">
    <property type="entry name" value="ADK"/>
    <property type="match status" value="1"/>
</dbReference>
<dbReference type="FunFam" id="3.40.50.300:FF:000106">
    <property type="entry name" value="Adenylate kinase mitochondrial"/>
    <property type="match status" value="1"/>
</dbReference>
<dbReference type="Gene3D" id="3.40.50.300">
    <property type="entry name" value="P-loop containing nucleotide triphosphate hydrolases"/>
    <property type="match status" value="1"/>
</dbReference>
<dbReference type="HAMAP" id="MF_00235">
    <property type="entry name" value="Adenylate_kinase_Adk"/>
    <property type="match status" value="1"/>
</dbReference>
<dbReference type="InterPro" id="IPR006259">
    <property type="entry name" value="Adenyl_kin_sub"/>
</dbReference>
<dbReference type="InterPro" id="IPR000850">
    <property type="entry name" value="Adenylat/UMP-CMP_kin"/>
</dbReference>
<dbReference type="InterPro" id="IPR007862">
    <property type="entry name" value="Adenylate_kinase_lid-dom"/>
</dbReference>
<dbReference type="InterPro" id="IPR027417">
    <property type="entry name" value="P-loop_NTPase"/>
</dbReference>
<dbReference type="NCBIfam" id="TIGR01351">
    <property type="entry name" value="adk"/>
    <property type="match status" value="1"/>
</dbReference>
<dbReference type="NCBIfam" id="NF001379">
    <property type="entry name" value="PRK00279.1-1"/>
    <property type="match status" value="1"/>
</dbReference>
<dbReference type="NCBIfam" id="NF001380">
    <property type="entry name" value="PRK00279.1-2"/>
    <property type="match status" value="1"/>
</dbReference>
<dbReference type="NCBIfam" id="NF001381">
    <property type="entry name" value="PRK00279.1-3"/>
    <property type="match status" value="1"/>
</dbReference>
<dbReference type="PANTHER" id="PTHR23359">
    <property type="entry name" value="NUCLEOTIDE KINASE"/>
    <property type="match status" value="1"/>
</dbReference>
<dbReference type="Pfam" id="PF00406">
    <property type="entry name" value="ADK"/>
    <property type="match status" value="1"/>
</dbReference>
<dbReference type="Pfam" id="PF05191">
    <property type="entry name" value="ADK_lid"/>
    <property type="match status" value="1"/>
</dbReference>
<dbReference type="PRINTS" id="PR00094">
    <property type="entry name" value="ADENYLTKNASE"/>
</dbReference>
<dbReference type="SUPFAM" id="SSF52540">
    <property type="entry name" value="P-loop containing nucleoside triphosphate hydrolases"/>
    <property type="match status" value="1"/>
</dbReference>
<organism>
    <name type="scientific">Francisella tularensis subsp. holarctica (strain OSU18)</name>
    <dbReference type="NCBI Taxonomy" id="393011"/>
    <lineage>
        <taxon>Bacteria</taxon>
        <taxon>Pseudomonadati</taxon>
        <taxon>Pseudomonadota</taxon>
        <taxon>Gammaproteobacteria</taxon>
        <taxon>Thiotrichales</taxon>
        <taxon>Francisellaceae</taxon>
        <taxon>Francisella</taxon>
    </lineage>
</organism>
<reference key="1">
    <citation type="journal article" date="2006" name="J. Bacteriol.">
        <title>Chromosome rearrangement and diversification of Francisella tularensis revealed by the type B (OSU18) genome sequence.</title>
        <authorList>
            <person name="Petrosino J.F."/>
            <person name="Xiang Q."/>
            <person name="Karpathy S.E."/>
            <person name="Jiang H."/>
            <person name="Yerrapragada S."/>
            <person name="Liu Y."/>
            <person name="Gioia J."/>
            <person name="Hemphill L."/>
            <person name="Gonzalez A."/>
            <person name="Raghavan T.M."/>
            <person name="Uzman A."/>
            <person name="Fox G.E."/>
            <person name="Highlander S."/>
            <person name="Reichard M."/>
            <person name="Morton R.J."/>
            <person name="Clinkenbeard K.D."/>
            <person name="Weinstock G.M."/>
        </authorList>
    </citation>
    <scope>NUCLEOTIDE SEQUENCE [LARGE SCALE GENOMIC DNA]</scope>
    <source>
        <strain>OSU18</strain>
    </source>
</reference>
<proteinExistence type="inferred from homology"/>
<name>KAD_FRATO</name>
<keyword id="KW-0067">ATP-binding</keyword>
<keyword id="KW-0963">Cytoplasm</keyword>
<keyword id="KW-0418">Kinase</keyword>
<keyword id="KW-0545">Nucleotide biosynthesis</keyword>
<keyword id="KW-0547">Nucleotide-binding</keyword>
<keyword id="KW-0808">Transferase</keyword>
<comment type="function">
    <text evidence="1">Catalyzes the reversible transfer of the terminal phosphate group between ATP and AMP. Plays an important role in cellular energy homeostasis and in adenine nucleotide metabolism.</text>
</comment>
<comment type="catalytic activity">
    <reaction evidence="1">
        <text>AMP + ATP = 2 ADP</text>
        <dbReference type="Rhea" id="RHEA:12973"/>
        <dbReference type="ChEBI" id="CHEBI:30616"/>
        <dbReference type="ChEBI" id="CHEBI:456215"/>
        <dbReference type="ChEBI" id="CHEBI:456216"/>
        <dbReference type="EC" id="2.7.4.3"/>
    </reaction>
</comment>
<comment type="pathway">
    <text evidence="1">Purine metabolism; AMP biosynthesis via salvage pathway; AMP from ADP: step 1/1.</text>
</comment>
<comment type="subunit">
    <text evidence="1">Monomer.</text>
</comment>
<comment type="subcellular location">
    <subcellularLocation>
        <location evidence="1">Cytoplasm</location>
    </subcellularLocation>
</comment>
<comment type="domain">
    <text evidence="1">Consists of three domains, a large central CORE domain and two small peripheral domains, NMPbind and LID, which undergo movements during catalysis. The LID domain closes over the site of phosphoryl transfer upon ATP binding. Assembling and dissambling the active center during each catalytic cycle provides an effective means to prevent ATP hydrolysis.</text>
</comment>
<comment type="similarity">
    <text evidence="1">Belongs to the adenylate kinase family.</text>
</comment>
<evidence type="ECO:0000255" key="1">
    <source>
        <dbReference type="HAMAP-Rule" id="MF_00235"/>
    </source>
</evidence>
<protein>
    <recommendedName>
        <fullName evidence="1">Adenylate kinase</fullName>
        <shortName evidence="1">AK</shortName>
        <ecNumber evidence="1">2.7.4.3</ecNumber>
    </recommendedName>
    <alternativeName>
        <fullName evidence="1">ATP-AMP transphosphorylase</fullName>
    </alternativeName>
    <alternativeName>
        <fullName evidence="1">ATP:AMP phosphotransferase</fullName>
    </alternativeName>
    <alternativeName>
        <fullName evidence="1">Adenylate monophosphate kinase</fullName>
    </alternativeName>
</protein>
<feature type="chain" id="PRO_1000058831" description="Adenylate kinase">
    <location>
        <begin position="1"/>
        <end position="218"/>
    </location>
</feature>
<feature type="region of interest" description="NMP" evidence="1">
    <location>
        <begin position="30"/>
        <end position="59"/>
    </location>
</feature>
<feature type="region of interest" description="LID" evidence="1">
    <location>
        <begin position="122"/>
        <end position="159"/>
    </location>
</feature>
<feature type="binding site" evidence="1">
    <location>
        <begin position="10"/>
        <end position="15"/>
    </location>
    <ligand>
        <name>ATP</name>
        <dbReference type="ChEBI" id="CHEBI:30616"/>
    </ligand>
</feature>
<feature type="binding site" evidence="1">
    <location>
        <position position="31"/>
    </location>
    <ligand>
        <name>AMP</name>
        <dbReference type="ChEBI" id="CHEBI:456215"/>
    </ligand>
</feature>
<feature type="binding site" evidence="1">
    <location>
        <position position="36"/>
    </location>
    <ligand>
        <name>AMP</name>
        <dbReference type="ChEBI" id="CHEBI:456215"/>
    </ligand>
</feature>
<feature type="binding site" evidence="1">
    <location>
        <begin position="57"/>
        <end position="59"/>
    </location>
    <ligand>
        <name>AMP</name>
        <dbReference type="ChEBI" id="CHEBI:456215"/>
    </ligand>
</feature>
<feature type="binding site" evidence="1">
    <location>
        <position position="92"/>
    </location>
    <ligand>
        <name>AMP</name>
        <dbReference type="ChEBI" id="CHEBI:456215"/>
    </ligand>
</feature>
<feature type="binding site" evidence="1">
    <location>
        <position position="123"/>
    </location>
    <ligand>
        <name>ATP</name>
        <dbReference type="ChEBI" id="CHEBI:30616"/>
    </ligand>
</feature>
<feature type="binding site" evidence="1">
    <location>
        <begin position="132"/>
        <end position="133"/>
    </location>
    <ligand>
        <name>ATP</name>
        <dbReference type="ChEBI" id="CHEBI:30616"/>
    </ligand>
</feature>
<feature type="binding site" evidence="1">
    <location>
        <position position="156"/>
    </location>
    <ligand>
        <name>AMP</name>
        <dbReference type="ChEBI" id="CHEBI:456215"/>
    </ligand>
</feature>
<feature type="binding site" evidence="1">
    <location>
        <position position="167"/>
    </location>
    <ligand>
        <name>AMP</name>
        <dbReference type="ChEBI" id="CHEBI:456215"/>
    </ligand>
</feature>
<feature type="binding site" evidence="1">
    <location>
        <position position="202"/>
    </location>
    <ligand>
        <name>ATP</name>
        <dbReference type="ChEBI" id="CHEBI:30616"/>
    </ligand>
</feature>
<accession>Q0BMG1</accession>
<gene>
    <name evidence="1" type="primary">adk</name>
    <name type="ordered locus">FTH_0788</name>
</gene>
<sequence>MRIILLGAPGAGKGTQAKIIEQKYNIAHISTGDMIRETIKSGSVLGQELKKVLDAGELVSDEFIIKIVKDRISKNDCNNGFLLDGVPRTIPQAQELDKLGVNIDYIVEVDVADNLLIERITGRRIHPASGRTYHTKFNPPKVADKDDVTGEPLITRTDDNEDTVKQRLSVYHAQTAKLIDFYRNFSSTNTKIPKYIKINGDQAVEKVSQDIFDQLNKR</sequence>